<reference key="1">
    <citation type="journal article" date="1994" name="Immunogenetics">
        <title>Cloning and sequencing of horse interferon-gamma cDNA.</title>
        <authorList>
            <person name="Grunig G."/>
            <person name="Himmler A."/>
            <person name="Antczak D.F."/>
        </authorList>
    </citation>
    <scope>NUCLEOTIDE SEQUENCE [MRNA]</scope>
</reference>
<reference key="2">
    <citation type="journal article" date="1994" name="DNA Seq.">
        <title>Nucleotide sequence of the equine interferon gamma cDNA.</title>
        <authorList>
            <person name="Curran J.A."/>
            <person name="Argyle D.J."/>
            <person name="Cox P."/>
            <person name="Onions D.E."/>
            <person name="Nicolson L."/>
        </authorList>
    </citation>
    <scope>NUCLEOTIDE SEQUENCE [MRNA]</scope>
</reference>
<proteinExistence type="evidence at transcript level"/>
<organism>
    <name type="scientific">Equus caballus</name>
    <name type="common">Horse</name>
    <dbReference type="NCBI Taxonomy" id="9796"/>
    <lineage>
        <taxon>Eukaryota</taxon>
        <taxon>Metazoa</taxon>
        <taxon>Chordata</taxon>
        <taxon>Craniata</taxon>
        <taxon>Vertebrata</taxon>
        <taxon>Euteleostomi</taxon>
        <taxon>Mammalia</taxon>
        <taxon>Eutheria</taxon>
        <taxon>Laurasiatheria</taxon>
        <taxon>Perissodactyla</taxon>
        <taxon>Equidae</taxon>
        <taxon>Equus</taxon>
    </lineage>
</organism>
<feature type="signal peptide" evidence="1">
    <location>
        <begin position="1"/>
        <end position="23"/>
    </location>
</feature>
<feature type="chain" id="PRO_0000016443" description="Interferon gamma">
    <location>
        <begin position="24"/>
        <end position="166"/>
    </location>
</feature>
<feature type="region of interest" description="Disordered" evidence="5">
    <location>
        <begin position="147"/>
        <end position="166"/>
    </location>
</feature>
<feature type="compositionally biased region" description="Basic residues" evidence="5">
    <location>
        <begin position="148"/>
        <end position="166"/>
    </location>
</feature>
<feature type="modified residue" description="Pyrrolidone carboxylic acid" evidence="2">
    <location>
        <position position="24"/>
    </location>
</feature>
<feature type="glycosylation site" description="N-linked (GlcNAc...) asparagine" evidence="4">
    <location>
        <position position="39"/>
    </location>
</feature>
<feature type="glycosylation site" description="N-linked (GlcNAc...) asparagine" evidence="4">
    <location>
        <position position="106"/>
    </location>
</feature>
<feature type="sequence conflict" description="In Ref. 2; BAA05876." evidence="6" ref="2">
    <original>N</original>
    <variation>K</variation>
    <location>
        <position position="2"/>
    </location>
</feature>
<gene>
    <name type="primary">IFNG</name>
</gene>
<comment type="function">
    <text evidence="2 3">Type II interferon produced by immune cells such as T-cells and NK cells that plays crucial roles in antimicrobial, antiviral, and antitumor responses by activating effector immune cells and enhancing antigen presentation. Primarily signals through the JAK-STAT pathway after interaction with its receptor IFNGR1 to affect gene regulation. Upon IFNG binding, IFNGR1 intracellular domain opens out to allow association of downstream signaling components JAK2, JAK1 and STAT1, leading to STAT1 activation, nuclear translocation and transcription of IFNG-regulated genes. Many of the induced genes are transcription factors such as IRF1 that are able to further drive regulation of a next wave of transcription. Plays a role in class I antigen presentation pathway by inducing a replacement of catalytic proteasome subunits with immunoproteasome subunits. In turn, increases the quantity, quality, and repertoire of peptides for class I MHC loading. Increases the efficiency of peptide generation also by inducing the expression of activator PA28 that associates with the proteasome and alters its proteolytic cleavage preference. Up-regulates as well MHC II complexes on the cell surface by promoting expression of several key molecules such as cathepsins B/CTSB, H/CTSH, and L/CTSL (By similarity). Participates in the regulation of hematopoietic stem cells during development and under homeostatic conditions by affecting their development, quiescence, and differentiation (By similarity).</text>
</comment>
<comment type="subunit">
    <text evidence="2">Homodimer. Interacts with IFNGR1 (via extracellular domain); this interaction promotes IFNGR1 dimerization.</text>
</comment>
<comment type="subcellular location">
    <subcellularLocation>
        <location evidence="2">Secreted</location>
    </subcellularLocation>
</comment>
<comment type="tissue specificity">
    <text>Released primarily from activated T lymphocytes.</text>
</comment>
<comment type="similarity">
    <text evidence="6">Belongs to the type II (or gamma) interferon family.</text>
</comment>
<protein>
    <recommendedName>
        <fullName>Interferon gamma</fullName>
        <shortName>IFN-gamma</shortName>
    </recommendedName>
</protein>
<accession>P42160</accession>
<accession>Q28387</accession>
<evidence type="ECO:0000250" key="1"/>
<evidence type="ECO:0000250" key="2">
    <source>
        <dbReference type="UniProtKB" id="P01579"/>
    </source>
</evidence>
<evidence type="ECO:0000250" key="3">
    <source>
        <dbReference type="UniProtKB" id="P01580"/>
    </source>
</evidence>
<evidence type="ECO:0000255" key="4"/>
<evidence type="ECO:0000256" key="5">
    <source>
        <dbReference type="SAM" id="MobiDB-lite"/>
    </source>
</evidence>
<evidence type="ECO:0000305" key="6"/>
<name>IFNG_HORSE</name>
<sequence>MNYTSFILAFQLCAILGSSTYYCQAAFFKEIENLKEYFNASNPDVGDGGPLFLDILKNWKEDSDKKIIQSQIVSFYFKLFENLKDNQVIQKSMDTIKEDLFVKFFNSSTSKLEDFQKLIQIPVNDLKVQRKAISELIKVMNDLSPKANLRKRKRSQNPFRGRRALQ</sequence>
<dbReference type="EMBL" id="U04050">
    <property type="protein sequence ID" value="AAA59061.1"/>
    <property type="molecule type" value="mRNA"/>
</dbReference>
<dbReference type="EMBL" id="D28520">
    <property type="protein sequence ID" value="BAA05876.1"/>
    <property type="molecule type" value="mRNA"/>
</dbReference>
<dbReference type="RefSeq" id="NP_001075418.1">
    <property type="nucleotide sequence ID" value="NM_001081949.1"/>
</dbReference>
<dbReference type="SMR" id="P42160"/>
<dbReference type="FunCoup" id="P42160">
    <property type="interactions" value="320"/>
</dbReference>
<dbReference type="STRING" id="9796.ENSECAP00000030547"/>
<dbReference type="GlyCosmos" id="P42160">
    <property type="glycosylation" value="2 sites, No reported glycans"/>
</dbReference>
<dbReference type="PaxDb" id="9796-ENSECAP00000030547"/>
<dbReference type="Ensembl" id="ENSECAT00000049519.2">
    <property type="protein sequence ID" value="ENSECAP00000030547.1"/>
    <property type="gene ID" value="ENSECAG00000028288.2"/>
</dbReference>
<dbReference type="GeneID" id="100034181"/>
<dbReference type="KEGG" id="ecb:100034181"/>
<dbReference type="CTD" id="3458"/>
<dbReference type="VGNC" id="VGNC:18951">
    <property type="gene designation" value="IFNG"/>
</dbReference>
<dbReference type="GeneTree" id="ENSGT00390000007831"/>
<dbReference type="HOGENOM" id="CLU_135106_0_0_1"/>
<dbReference type="InParanoid" id="P42160"/>
<dbReference type="OMA" id="QIVSMYL"/>
<dbReference type="OrthoDB" id="9937106at2759"/>
<dbReference type="TreeFam" id="TF336308"/>
<dbReference type="Proteomes" id="UP000002281">
    <property type="component" value="Chromosome 6"/>
</dbReference>
<dbReference type="Bgee" id="ENSECAG00000028288">
    <property type="expression patterns" value="Expressed in blood and 7 other cell types or tissues"/>
</dbReference>
<dbReference type="GO" id="GO:0005615">
    <property type="term" value="C:extracellular space"/>
    <property type="evidence" value="ECO:0000318"/>
    <property type="project" value="GO_Central"/>
</dbReference>
<dbReference type="GO" id="GO:0005125">
    <property type="term" value="F:cytokine activity"/>
    <property type="evidence" value="ECO:0000318"/>
    <property type="project" value="GO_Central"/>
</dbReference>
<dbReference type="GO" id="GO:0005133">
    <property type="term" value="F:type II interferon receptor binding"/>
    <property type="evidence" value="ECO:0007669"/>
    <property type="project" value="InterPro"/>
</dbReference>
<dbReference type="GO" id="GO:0002250">
    <property type="term" value="P:adaptive immune response"/>
    <property type="evidence" value="ECO:0000318"/>
    <property type="project" value="GO_Central"/>
</dbReference>
<dbReference type="GO" id="GO:0048143">
    <property type="term" value="P:astrocyte activation"/>
    <property type="evidence" value="ECO:0007669"/>
    <property type="project" value="Ensembl"/>
</dbReference>
<dbReference type="GO" id="GO:0097696">
    <property type="term" value="P:cell surface receptor signaling pathway via STAT"/>
    <property type="evidence" value="ECO:0007669"/>
    <property type="project" value="Ensembl"/>
</dbReference>
<dbReference type="GO" id="GO:0051607">
    <property type="term" value="P:defense response to virus"/>
    <property type="evidence" value="ECO:0007669"/>
    <property type="project" value="UniProtKB-KW"/>
</dbReference>
<dbReference type="GO" id="GO:0097191">
    <property type="term" value="P:extrinsic apoptotic signaling pathway"/>
    <property type="evidence" value="ECO:0007669"/>
    <property type="project" value="Ensembl"/>
</dbReference>
<dbReference type="GO" id="GO:0038096">
    <property type="term" value="P:Fc-gamma receptor signaling pathway involved in phagocytosis"/>
    <property type="evidence" value="ECO:0007669"/>
    <property type="project" value="Ensembl"/>
</dbReference>
<dbReference type="GO" id="GO:0006959">
    <property type="term" value="P:humoral immune response"/>
    <property type="evidence" value="ECO:0000318"/>
    <property type="project" value="GO_Central"/>
</dbReference>
<dbReference type="GO" id="GO:0002281">
    <property type="term" value="P:macrophage activation involved in immune response"/>
    <property type="evidence" value="ECO:0007669"/>
    <property type="project" value="Ensembl"/>
</dbReference>
<dbReference type="GO" id="GO:0030225">
    <property type="term" value="P:macrophage differentiation"/>
    <property type="evidence" value="ECO:0007669"/>
    <property type="project" value="Ensembl"/>
</dbReference>
<dbReference type="GO" id="GO:0001774">
    <property type="term" value="P:microglial cell activation"/>
    <property type="evidence" value="ECO:0007669"/>
    <property type="project" value="Ensembl"/>
</dbReference>
<dbReference type="GO" id="GO:0045892">
    <property type="term" value="P:negative regulation of DNA-templated transcription"/>
    <property type="evidence" value="ECO:0007669"/>
    <property type="project" value="Ensembl"/>
</dbReference>
<dbReference type="GO" id="GO:0032700">
    <property type="term" value="P:negative regulation of interleukin-17 production"/>
    <property type="evidence" value="ECO:0007669"/>
    <property type="project" value="Ensembl"/>
</dbReference>
<dbReference type="GO" id="GO:0048662">
    <property type="term" value="P:negative regulation of smooth muscle cell proliferation"/>
    <property type="evidence" value="ECO:0007669"/>
    <property type="project" value="Ensembl"/>
</dbReference>
<dbReference type="GO" id="GO:1902004">
    <property type="term" value="P:positive regulation of amyloid-beta formation"/>
    <property type="evidence" value="ECO:0007669"/>
    <property type="project" value="Ensembl"/>
</dbReference>
<dbReference type="GO" id="GO:0010508">
    <property type="term" value="P:positive regulation of autophagy"/>
    <property type="evidence" value="ECO:0000250"/>
    <property type="project" value="UniProtKB"/>
</dbReference>
<dbReference type="GO" id="GO:0032834">
    <property type="term" value="P:positive regulation of CD4-positive, CD25-positive, alpha-beta regulatory T cell differentiation involved in immune response"/>
    <property type="evidence" value="ECO:0007669"/>
    <property type="project" value="Ensembl"/>
</dbReference>
<dbReference type="GO" id="GO:0032722">
    <property type="term" value="P:positive regulation of chemokine production"/>
    <property type="evidence" value="ECO:0007669"/>
    <property type="project" value="Ensembl"/>
</dbReference>
<dbReference type="GO" id="GO:0010634">
    <property type="term" value="P:positive regulation of epithelial cell migration"/>
    <property type="evidence" value="ECO:0007669"/>
    <property type="project" value="Ensembl"/>
</dbReference>
<dbReference type="GO" id="GO:0060552">
    <property type="term" value="P:positive regulation of fructose 1,6-bisphosphate metabolic process"/>
    <property type="evidence" value="ECO:0007669"/>
    <property type="project" value="Ensembl"/>
</dbReference>
<dbReference type="GO" id="GO:0050729">
    <property type="term" value="P:positive regulation of inflammatory response"/>
    <property type="evidence" value="ECO:0007669"/>
    <property type="project" value="Ensembl"/>
</dbReference>
<dbReference type="GO" id="GO:0032735">
    <property type="term" value="P:positive regulation of interleukin-12 production"/>
    <property type="evidence" value="ECO:0007669"/>
    <property type="project" value="Ensembl"/>
</dbReference>
<dbReference type="GO" id="GO:0032747">
    <property type="term" value="P:positive regulation of interleukin-23 production"/>
    <property type="evidence" value="ECO:0007669"/>
    <property type="project" value="Ensembl"/>
</dbReference>
<dbReference type="GO" id="GO:0032755">
    <property type="term" value="P:positive regulation of interleukin-6 production"/>
    <property type="evidence" value="ECO:0007669"/>
    <property type="project" value="Ensembl"/>
</dbReference>
<dbReference type="GO" id="GO:0051044">
    <property type="term" value="P:positive regulation of membrane protein ectodomain proteolysis"/>
    <property type="evidence" value="ECO:0007669"/>
    <property type="project" value="Ensembl"/>
</dbReference>
<dbReference type="GO" id="GO:0050769">
    <property type="term" value="P:positive regulation of neurogenesis"/>
    <property type="evidence" value="ECO:0007669"/>
    <property type="project" value="Ensembl"/>
</dbReference>
<dbReference type="GO" id="GO:0045429">
    <property type="term" value="P:positive regulation of nitric oxide biosynthetic process"/>
    <property type="evidence" value="ECO:0007669"/>
    <property type="project" value="Ensembl"/>
</dbReference>
<dbReference type="GO" id="GO:0045672">
    <property type="term" value="P:positive regulation of osteoclast differentiation"/>
    <property type="evidence" value="ECO:0007669"/>
    <property type="project" value="Ensembl"/>
</dbReference>
<dbReference type="GO" id="GO:0042307">
    <property type="term" value="P:positive regulation of protein import into nucleus"/>
    <property type="evidence" value="ECO:0007669"/>
    <property type="project" value="Ensembl"/>
</dbReference>
<dbReference type="GO" id="GO:0031334">
    <property type="term" value="P:positive regulation of protein-containing complex assembly"/>
    <property type="evidence" value="ECO:0007669"/>
    <property type="project" value="Ensembl"/>
</dbReference>
<dbReference type="GO" id="GO:0034393">
    <property type="term" value="P:positive regulation of smooth muscle cell apoptotic process"/>
    <property type="evidence" value="ECO:0007669"/>
    <property type="project" value="Ensembl"/>
</dbReference>
<dbReference type="GO" id="GO:2000309">
    <property type="term" value="P:positive regulation of tumor necrosis factor (ligand) superfamily member 11 production"/>
    <property type="evidence" value="ECO:0007669"/>
    <property type="project" value="Ensembl"/>
</dbReference>
<dbReference type="GO" id="GO:0060557">
    <property type="term" value="P:positive regulation of vitamin D biosynthetic process"/>
    <property type="evidence" value="ECO:0007669"/>
    <property type="project" value="Ensembl"/>
</dbReference>
<dbReference type="GO" id="GO:0050796">
    <property type="term" value="P:regulation of insulin secretion"/>
    <property type="evidence" value="ECO:0007669"/>
    <property type="project" value="Ensembl"/>
</dbReference>
<dbReference type="GO" id="GO:0060333">
    <property type="term" value="P:type II interferon-mediated signaling pathway"/>
    <property type="evidence" value="ECO:0007669"/>
    <property type="project" value="Ensembl"/>
</dbReference>
<dbReference type="GO" id="GO:0038196">
    <property type="term" value="P:type III interferon-mediated signaling pathway"/>
    <property type="evidence" value="ECO:0007669"/>
    <property type="project" value="Ensembl"/>
</dbReference>
<dbReference type="FunFam" id="1.20.1250.10:FF:000007">
    <property type="entry name" value="Interferon gamma"/>
    <property type="match status" value="1"/>
</dbReference>
<dbReference type="Gene3D" id="1.20.1250.10">
    <property type="match status" value="1"/>
</dbReference>
<dbReference type="InterPro" id="IPR009079">
    <property type="entry name" value="4_helix_cytokine-like_core"/>
</dbReference>
<dbReference type="InterPro" id="IPR002069">
    <property type="entry name" value="Interferon_gamma"/>
</dbReference>
<dbReference type="PANTHER" id="PTHR11419">
    <property type="entry name" value="INTERFERON GAMMA"/>
    <property type="match status" value="1"/>
</dbReference>
<dbReference type="PANTHER" id="PTHR11419:SF0">
    <property type="entry name" value="INTERFERON GAMMA"/>
    <property type="match status" value="1"/>
</dbReference>
<dbReference type="Pfam" id="PF00714">
    <property type="entry name" value="IFN-gamma"/>
    <property type="match status" value="1"/>
</dbReference>
<dbReference type="PIRSF" id="PIRSF001936">
    <property type="entry name" value="IFN-gamma"/>
    <property type="match status" value="1"/>
</dbReference>
<dbReference type="SUPFAM" id="SSF47266">
    <property type="entry name" value="4-helical cytokines"/>
    <property type="match status" value="1"/>
</dbReference>
<keyword id="KW-0051">Antiviral defense</keyword>
<keyword id="KW-0202">Cytokine</keyword>
<keyword id="KW-0325">Glycoprotein</keyword>
<keyword id="KW-0341">Growth regulation</keyword>
<keyword id="KW-0873">Pyrrolidone carboxylic acid</keyword>
<keyword id="KW-1185">Reference proteome</keyword>
<keyword id="KW-0964">Secreted</keyword>
<keyword id="KW-0732">Signal</keyword>